<comment type="function">
    <text evidence="3 4 5 6 7 8 11 15">Component of the CST complex proposed to act as a specialized replication factor promoting DNA replication under conditions of replication stress or natural replication barriers such as the telomere duplex. The CST complex binds single-stranded DNA with high affinity in a sequence-independent manner, while isolated subunits bind DNA with low affinity by themselves. Initially the CST complex has been proposed to protect telomeres from DNA degradation (PubMed:19854130). However, the CST complex has been shown to be involved in several aspects of telomere replication. The CST complex inhibits telomerase and is involved in telomere length homeostasis; it is proposed to bind to newly telomerase-synthesized 3' overhangs and to terminate telomerase action implicating the association with the ACD:POT1 complex thus interfering with its telomerase stimulation activity. The CST complex is also proposed to be involved in fill-in synthesis of the telomeric C-strand probably implicating recruitment and activation of DNA polymerase alpha (PubMed:22763445, PubMed:22964711). The CST complex facilitates recovery from many forms of exogenous DNA damage; seems to be involved in the re-initiation of DNA replication at repaired forks and/or dormant origins (PubMed:25483097). Required for efficicient replication of the duplex region of the telomere. Promotes efficient replication of lagging-strand telomeres (PubMed:22863775, PubMed:22964711). Promotes general replication start following replication-fork stalling implicating new origin firing (PubMed:22863775). May be in involved in C-strand fill-in during late S/G2 phase independent of its role in telomere duplex replication (PubMed:23142664).</text>
</comment>
<comment type="function">
    <text evidence="3 4">Component of the CST complex, a complex that binds to single-stranded DNA and is required to protect telomeres from DNA degradation. The CST complex binds single-stranded DNA with high affinity in a sequence-independent manner, while isolated subunits bind DNA with low affinity by themselves. In addition to telomere protection, the CST complex has probably a more general role in DNA metabolism at non-telomeric sites.</text>
</comment>
<comment type="subunit">
    <text evidence="3 4 9 12">Component of the CST complex, composed of TEN1/C17orf106, CTC1/C17orf68 and STN1; in the complex interacts directly with TEN1 and CTC1. Interacts with ACD/TPP1, POT1 and POLA1.</text>
</comment>
<comment type="interaction">
    <interactant intactId="EBI-746930">
        <id>Q9H668</id>
    </interactant>
    <interactant intactId="EBI-717666">
        <id>Q96AP0</id>
        <label>ACD</label>
    </interactant>
    <organismsDiffer>false</organismsDiffer>
    <experiments>4</experiments>
</comment>
<comment type="interaction">
    <interactant intactId="EBI-746930">
        <id>Q9H668</id>
    </interactant>
    <interactant intactId="EBI-8643161">
        <id>Q9NX04</id>
        <label>AIRIM</label>
    </interactant>
    <organismsDiffer>false</organismsDiffer>
    <experiments>5</experiments>
</comment>
<comment type="interaction">
    <interactant intactId="EBI-746930">
        <id>Q9H668</id>
    </interactant>
    <interactant intactId="EBI-725606">
        <id>Q9NWQ9</id>
        <label>C14orf119</label>
    </interactant>
    <organismsDiffer>false</organismsDiffer>
    <experiments>4</experiments>
</comment>
<comment type="interaction">
    <interactant intactId="EBI-746930">
        <id>Q9H668</id>
    </interactant>
    <interactant intactId="EBI-2562802">
        <id>Q2NKJ3</id>
        <label>CTC1</label>
    </interactant>
    <organismsDiffer>false</organismsDiffer>
    <experiments>9</experiments>
</comment>
<comment type="interaction">
    <interactant intactId="EBI-746930">
        <id>Q9H668</id>
    </interactant>
    <interactant intactId="EBI-15994382">
        <id>Q2NKJ3-1</id>
        <label>CTC1</label>
    </interactant>
    <organismsDiffer>false</organismsDiffer>
    <experiments>5</experiments>
</comment>
<comment type="interaction">
    <interactant intactId="EBI-746930">
        <id>Q9H668</id>
    </interactant>
    <interactant intactId="EBI-466029">
        <id>P42858</id>
        <label>HTT</label>
    </interactant>
    <organismsDiffer>false</organismsDiffer>
    <experiments>3</experiments>
</comment>
<comment type="interaction">
    <interactant intactId="EBI-746930">
        <id>Q9H668</id>
    </interactant>
    <interactant intactId="EBI-747813">
        <id>Q5SW96</id>
        <label>LDLRAP1</label>
    </interactant>
    <organismsDiffer>false</organismsDiffer>
    <experiments>13</experiments>
</comment>
<comment type="interaction">
    <interactant intactId="EBI-746930">
        <id>Q9H668</id>
    </interactant>
    <interactant intactId="EBI-10274069">
        <id>Q8TCE9</id>
        <label>LGALS14</label>
    </interactant>
    <organismsDiffer>false</organismsDiffer>
    <experiments>3</experiments>
</comment>
<comment type="interaction">
    <interactant intactId="EBI-746930">
        <id>Q9H668</id>
    </interactant>
    <interactant intactId="EBI-2340269">
        <id>Q13064</id>
        <label>MKRN3</label>
    </interactant>
    <organismsDiffer>false</organismsDiffer>
    <experiments>3</experiments>
</comment>
<comment type="interaction">
    <interactant intactId="EBI-746930">
        <id>Q9H668</id>
    </interactant>
    <interactant intactId="EBI-741158">
        <id>Q96HA8</id>
        <label>NTAQ1</label>
    </interactant>
    <organismsDiffer>false</organismsDiffer>
    <experiments>3</experiments>
</comment>
<comment type="interaction">
    <interactant intactId="EBI-746930">
        <id>Q9H668</id>
    </interactant>
    <interactant intactId="EBI-1504830">
        <id>Q9P2K3-2</id>
        <label>RCOR3</label>
    </interactant>
    <organismsDiffer>false</organismsDiffer>
    <experiments>3</experiments>
</comment>
<comment type="interaction">
    <interactant intactId="EBI-746930">
        <id>Q9H668</id>
    </interactant>
    <interactant intactId="EBI-3921347">
        <id>P51687</id>
        <label>SUOX</label>
    </interactant>
    <organismsDiffer>false</organismsDiffer>
    <experiments>3</experiments>
</comment>
<comment type="interaction">
    <interactant intactId="EBI-746930">
        <id>Q9H668</id>
    </interactant>
    <interactant intactId="EBI-740781">
        <id>Q9BT92</id>
        <label>TCHP</label>
    </interactant>
    <organismsDiffer>false</organismsDiffer>
    <experiments>3</experiments>
</comment>
<comment type="interaction">
    <interactant intactId="EBI-746930">
        <id>Q9H668</id>
    </interactant>
    <interactant intactId="EBI-2562799">
        <id>Q86WV5</id>
        <label>TEN1</label>
    </interactant>
    <organismsDiffer>false</organismsDiffer>
    <experiments>13</experiments>
</comment>
<comment type="interaction">
    <interactant intactId="EBI-746930">
        <id>Q9H668</id>
    </interactant>
    <interactant intactId="EBI-74615">
        <id>Q9H0E2</id>
        <label>TOLLIP</label>
    </interactant>
    <organismsDiffer>false</organismsDiffer>
    <experiments>3</experiments>
</comment>
<comment type="interaction">
    <interactant intactId="EBI-746930">
        <id>Q9H668</id>
    </interactant>
    <interactant intactId="EBI-15619703">
        <id>O14773-1</id>
        <label>TPP1</label>
    </interactant>
    <organismsDiffer>false</organismsDiffer>
    <experiments>2</experiments>
</comment>
<comment type="interaction">
    <interactant intactId="EBI-746930">
        <id>Q9H668</id>
    </interactant>
    <interactant intactId="EBI-11059915">
        <id>Q8N7C3</id>
        <label>TRIML2</label>
    </interactant>
    <organismsDiffer>false</organismsDiffer>
    <experiments>3</experiments>
</comment>
<comment type="interaction">
    <interactant intactId="EBI-746930">
        <id>Q9H668</id>
    </interactant>
    <interactant intactId="EBI-2932492">
        <id>Q99757</id>
        <label>TXN2</label>
    </interactant>
    <organismsDiffer>false</organismsDiffer>
    <experiments>3</experiments>
</comment>
<comment type="subcellular location">
    <subcellularLocation>
        <location evidence="4">Nucleus</location>
    </subcellularLocation>
    <subcellularLocation>
        <location evidence="3 4 5">Chromosome</location>
        <location evidence="3 4 5">Telomere</location>
    </subcellularLocation>
</comment>
<comment type="disease" evidence="13">
    <disease id="DI-04949">
        <name>Cerebroretinal microangiopathy with calcifications and cysts 2</name>
        <acronym>CRMCC2</acronym>
        <description>An autosomal recessive, multisystemic disorder characterized by intrauterine growth retardation and, later in life, premature aging symptoms, including poor growth, graying hair, liver fibrosis, portal hypertension, esophageal varices, osteopenia, pancytopenia, hypocellular bone marrow, and vascular telangiectasia resulting in gastrointestinal bleeding. Brain calcifications and white matter changes are responsible for signs including spasticity, ataxia, or dystonia observed in some patients.</description>
        <dbReference type="MIM" id="617341"/>
    </disease>
    <text>The disease is caused by variants affecting the gene represented in this entry.</text>
</comment>
<comment type="miscellaneous">
    <text>Cells expressing STN1 mutants defective for dimerization with TEN1 display elongated telomeres and telomere defects associated with telomere uncapping.</text>
</comment>
<comment type="similarity">
    <text evidence="14">Belongs to the STN1 family.</text>
</comment>
<reference key="1">
    <citation type="journal article" date="2004" name="Nat. Genet.">
        <title>Complete sequencing and characterization of 21,243 full-length human cDNAs.</title>
        <authorList>
            <person name="Ota T."/>
            <person name="Suzuki Y."/>
            <person name="Nishikawa T."/>
            <person name="Otsuki T."/>
            <person name="Sugiyama T."/>
            <person name="Irie R."/>
            <person name="Wakamatsu A."/>
            <person name="Hayashi K."/>
            <person name="Sato H."/>
            <person name="Nagai K."/>
            <person name="Kimura K."/>
            <person name="Makita H."/>
            <person name="Sekine M."/>
            <person name="Obayashi M."/>
            <person name="Nishi T."/>
            <person name="Shibahara T."/>
            <person name="Tanaka T."/>
            <person name="Ishii S."/>
            <person name="Yamamoto J."/>
            <person name="Saito K."/>
            <person name="Kawai Y."/>
            <person name="Isono Y."/>
            <person name="Nakamura Y."/>
            <person name="Nagahari K."/>
            <person name="Murakami K."/>
            <person name="Yasuda T."/>
            <person name="Iwayanagi T."/>
            <person name="Wagatsuma M."/>
            <person name="Shiratori A."/>
            <person name="Sudo H."/>
            <person name="Hosoiri T."/>
            <person name="Kaku Y."/>
            <person name="Kodaira H."/>
            <person name="Kondo H."/>
            <person name="Sugawara M."/>
            <person name="Takahashi M."/>
            <person name="Kanda K."/>
            <person name="Yokoi T."/>
            <person name="Furuya T."/>
            <person name="Kikkawa E."/>
            <person name="Omura Y."/>
            <person name="Abe K."/>
            <person name="Kamihara K."/>
            <person name="Katsuta N."/>
            <person name="Sato K."/>
            <person name="Tanikawa M."/>
            <person name="Yamazaki M."/>
            <person name="Ninomiya K."/>
            <person name="Ishibashi T."/>
            <person name="Yamashita H."/>
            <person name="Murakawa K."/>
            <person name="Fujimori K."/>
            <person name="Tanai H."/>
            <person name="Kimata M."/>
            <person name="Watanabe M."/>
            <person name="Hiraoka S."/>
            <person name="Chiba Y."/>
            <person name="Ishida S."/>
            <person name="Ono Y."/>
            <person name="Takiguchi S."/>
            <person name="Watanabe S."/>
            <person name="Yosida M."/>
            <person name="Hotuta T."/>
            <person name="Kusano J."/>
            <person name="Kanehori K."/>
            <person name="Takahashi-Fujii A."/>
            <person name="Hara H."/>
            <person name="Tanase T.-O."/>
            <person name="Nomura Y."/>
            <person name="Togiya S."/>
            <person name="Komai F."/>
            <person name="Hara R."/>
            <person name="Takeuchi K."/>
            <person name="Arita M."/>
            <person name="Imose N."/>
            <person name="Musashino K."/>
            <person name="Yuuki H."/>
            <person name="Oshima A."/>
            <person name="Sasaki N."/>
            <person name="Aotsuka S."/>
            <person name="Yoshikawa Y."/>
            <person name="Matsunawa H."/>
            <person name="Ichihara T."/>
            <person name="Shiohata N."/>
            <person name="Sano S."/>
            <person name="Moriya S."/>
            <person name="Momiyama H."/>
            <person name="Satoh N."/>
            <person name="Takami S."/>
            <person name="Terashima Y."/>
            <person name="Suzuki O."/>
            <person name="Nakagawa S."/>
            <person name="Senoh A."/>
            <person name="Mizoguchi H."/>
            <person name="Goto Y."/>
            <person name="Shimizu F."/>
            <person name="Wakebe H."/>
            <person name="Hishigaki H."/>
            <person name="Watanabe T."/>
            <person name="Sugiyama A."/>
            <person name="Takemoto M."/>
            <person name="Kawakami B."/>
            <person name="Yamazaki M."/>
            <person name="Watanabe K."/>
            <person name="Kumagai A."/>
            <person name="Itakura S."/>
            <person name="Fukuzumi Y."/>
            <person name="Fujimori Y."/>
            <person name="Komiyama M."/>
            <person name="Tashiro H."/>
            <person name="Tanigami A."/>
            <person name="Fujiwara T."/>
            <person name="Ono T."/>
            <person name="Yamada K."/>
            <person name="Fujii Y."/>
            <person name="Ozaki K."/>
            <person name="Hirao M."/>
            <person name="Ohmori Y."/>
            <person name="Kawabata A."/>
            <person name="Hikiji T."/>
            <person name="Kobatake N."/>
            <person name="Inagaki H."/>
            <person name="Ikema Y."/>
            <person name="Okamoto S."/>
            <person name="Okitani R."/>
            <person name="Kawakami T."/>
            <person name="Noguchi S."/>
            <person name="Itoh T."/>
            <person name="Shigeta K."/>
            <person name="Senba T."/>
            <person name="Matsumura K."/>
            <person name="Nakajima Y."/>
            <person name="Mizuno T."/>
            <person name="Morinaga M."/>
            <person name="Sasaki M."/>
            <person name="Togashi T."/>
            <person name="Oyama M."/>
            <person name="Hata H."/>
            <person name="Watanabe M."/>
            <person name="Komatsu T."/>
            <person name="Mizushima-Sugano J."/>
            <person name="Satoh T."/>
            <person name="Shirai Y."/>
            <person name="Takahashi Y."/>
            <person name="Nakagawa K."/>
            <person name="Okumura K."/>
            <person name="Nagase T."/>
            <person name="Nomura N."/>
            <person name="Kikuchi H."/>
            <person name="Masuho Y."/>
            <person name="Yamashita R."/>
            <person name="Nakai K."/>
            <person name="Yada T."/>
            <person name="Nakamura Y."/>
            <person name="Ohara O."/>
            <person name="Isogai T."/>
            <person name="Sugano S."/>
        </authorList>
    </citation>
    <scope>NUCLEOTIDE SEQUENCE [LARGE SCALE MRNA]</scope>
    <scope>VARIANTS ALA-151 AND CYS-248</scope>
    <source>
        <tissue>Small intestine</tissue>
    </source>
</reference>
<reference key="2">
    <citation type="journal article" date="2004" name="Nature">
        <title>The DNA sequence and comparative analysis of human chromosome 10.</title>
        <authorList>
            <person name="Deloukas P."/>
            <person name="Earthrowl M.E."/>
            <person name="Grafham D.V."/>
            <person name="Rubenfield M."/>
            <person name="French L."/>
            <person name="Steward C.A."/>
            <person name="Sims S.K."/>
            <person name="Jones M.C."/>
            <person name="Searle S."/>
            <person name="Scott C."/>
            <person name="Howe K."/>
            <person name="Hunt S.E."/>
            <person name="Andrews T.D."/>
            <person name="Gilbert J.G.R."/>
            <person name="Swarbreck D."/>
            <person name="Ashurst J.L."/>
            <person name="Taylor A."/>
            <person name="Battles J."/>
            <person name="Bird C.P."/>
            <person name="Ainscough R."/>
            <person name="Almeida J.P."/>
            <person name="Ashwell R.I.S."/>
            <person name="Ambrose K.D."/>
            <person name="Babbage A.K."/>
            <person name="Bagguley C.L."/>
            <person name="Bailey J."/>
            <person name="Banerjee R."/>
            <person name="Bates K."/>
            <person name="Beasley H."/>
            <person name="Bray-Allen S."/>
            <person name="Brown A.J."/>
            <person name="Brown J.Y."/>
            <person name="Burford D.C."/>
            <person name="Burrill W."/>
            <person name="Burton J."/>
            <person name="Cahill P."/>
            <person name="Camire D."/>
            <person name="Carter N.P."/>
            <person name="Chapman J.C."/>
            <person name="Clark S.Y."/>
            <person name="Clarke G."/>
            <person name="Clee C.M."/>
            <person name="Clegg S."/>
            <person name="Corby N."/>
            <person name="Coulson A."/>
            <person name="Dhami P."/>
            <person name="Dutta I."/>
            <person name="Dunn M."/>
            <person name="Faulkner L."/>
            <person name="Frankish A."/>
            <person name="Frankland J.A."/>
            <person name="Garner P."/>
            <person name="Garnett J."/>
            <person name="Gribble S."/>
            <person name="Griffiths C."/>
            <person name="Grocock R."/>
            <person name="Gustafson E."/>
            <person name="Hammond S."/>
            <person name="Harley J.L."/>
            <person name="Hart E."/>
            <person name="Heath P.D."/>
            <person name="Ho T.P."/>
            <person name="Hopkins B."/>
            <person name="Horne J."/>
            <person name="Howden P.J."/>
            <person name="Huckle E."/>
            <person name="Hynds C."/>
            <person name="Johnson C."/>
            <person name="Johnson D."/>
            <person name="Kana A."/>
            <person name="Kay M."/>
            <person name="Kimberley A.M."/>
            <person name="Kershaw J.K."/>
            <person name="Kokkinaki M."/>
            <person name="Laird G.K."/>
            <person name="Lawlor S."/>
            <person name="Lee H.M."/>
            <person name="Leongamornlert D.A."/>
            <person name="Laird G."/>
            <person name="Lloyd C."/>
            <person name="Lloyd D.M."/>
            <person name="Loveland J."/>
            <person name="Lovell J."/>
            <person name="McLaren S."/>
            <person name="McLay K.E."/>
            <person name="McMurray A."/>
            <person name="Mashreghi-Mohammadi M."/>
            <person name="Matthews L."/>
            <person name="Milne S."/>
            <person name="Nickerson T."/>
            <person name="Nguyen M."/>
            <person name="Overton-Larty E."/>
            <person name="Palmer S.A."/>
            <person name="Pearce A.V."/>
            <person name="Peck A.I."/>
            <person name="Pelan S."/>
            <person name="Phillimore B."/>
            <person name="Porter K."/>
            <person name="Rice C.M."/>
            <person name="Rogosin A."/>
            <person name="Ross M.T."/>
            <person name="Sarafidou T."/>
            <person name="Sehra H.K."/>
            <person name="Shownkeen R."/>
            <person name="Skuce C.D."/>
            <person name="Smith M."/>
            <person name="Standring L."/>
            <person name="Sycamore N."/>
            <person name="Tester J."/>
            <person name="Thorpe A."/>
            <person name="Torcasso W."/>
            <person name="Tracey A."/>
            <person name="Tromans A."/>
            <person name="Tsolas J."/>
            <person name="Wall M."/>
            <person name="Walsh J."/>
            <person name="Wang H."/>
            <person name="Weinstock K."/>
            <person name="West A.P."/>
            <person name="Willey D.L."/>
            <person name="Whitehead S.L."/>
            <person name="Wilming L."/>
            <person name="Wray P.W."/>
            <person name="Young L."/>
            <person name="Chen Y."/>
            <person name="Lovering R.C."/>
            <person name="Moschonas N.K."/>
            <person name="Siebert R."/>
            <person name="Fechtel K."/>
            <person name="Bentley D."/>
            <person name="Durbin R.M."/>
            <person name="Hubbard T."/>
            <person name="Doucette-Stamm L."/>
            <person name="Beck S."/>
            <person name="Smith D.R."/>
            <person name="Rogers J."/>
        </authorList>
    </citation>
    <scope>NUCLEOTIDE SEQUENCE [LARGE SCALE GENOMIC DNA]</scope>
</reference>
<reference key="3">
    <citation type="submission" date="2005-09" db="EMBL/GenBank/DDBJ databases">
        <authorList>
            <person name="Mural R.J."/>
            <person name="Istrail S."/>
            <person name="Sutton G.G."/>
            <person name="Florea L."/>
            <person name="Halpern A.L."/>
            <person name="Mobarry C.M."/>
            <person name="Lippert R."/>
            <person name="Walenz B."/>
            <person name="Shatkay H."/>
            <person name="Dew I."/>
            <person name="Miller J.R."/>
            <person name="Flanigan M.J."/>
            <person name="Edwards N.J."/>
            <person name="Bolanos R."/>
            <person name="Fasulo D."/>
            <person name="Halldorsson B.V."/>
            <person name="Hannenhalli S."/>
            <person name="Turner R."/>
            <person name="Yooseph S."/>
            <person name="Lu F."/>
            <person name="Nusskern D.R."/>
            <person name="Shue B.C."/>
            <person name="Zheng X.H."/>
            <person name="Zhong F."/>
            <person name="Delcher A.L."/>
            <person name="Huson D.H."/>
            <person name="Kravitz S.A."/>
            <person name="Mouchard L."/>
            <person name="Reinert K."/>
            <person name="Remington K.A."/>
            <person name="Clark A.G."/>
            <person name="Waterman M.S."/>
            <person name="Eichler E.E."/>
            <person name="Adams M.D."/>
            <person name="Hunkapiller M.W."/>
            <person name="Myers E.W."/>
            <person name="Venter J.C."/>
        </authorList>
    </citation>
    <scope>NUCLEOTIDE SEQUENCE [LARGE SCALE GENOMIC DNA]</scope>
</reference>
<reference key="4">
    <citation type="journal article" date="2004" name="Genome Res.">
        <title>The status, quality, and expansion of the NIH full-length cDNA project: the Mammalian Gene Collection (MGC).</title>
        <authorList>
            <consortium name="The MGC Project Team"/>
        </authorList>
    </citation>
    <scope>NUCLEOTIDE SEQUENCE [LARGE SCALE MRNA]</scope>
    <scope>VARIANTS ALA-151 AND CYS-248</scope>
    <source>
        <tissue>Ovary</tissue>
    </source>
</reference>
<reference key="5">
    <citation type="journal article" date="2009" name="Mol. Cell">
        <title>RPA-like mammalian Ctc1-Stn1-Ten1 complex binds to single-stranded DNA and protects telomeres independently of the Pot1 pathway.</title>
        <authorList>
            <person name="Miyake Y."/>
            <person name="Nakamura M."/>
            <person name="Nabetani A."/>
            <person name="Shimamura S."/>
            <person name="Tamura M."/>
            <person name="Yonehara S."/>
            <person name="Saito M."/>
            <person name="Ishikawa F."/>
        </authorList>
    </citation>
    <scope>FUNCTION</scope>
    <scope>IDENTIFICATION IN THE CST COMPLEX</scope>
    <scope>SUBCELLULAR LOCATION</scope>
    <scope>INTERACTION WITH CTC1 AND TEN1</scope>
</reference>
<reference key="6">
    <citation type="journal article" date="2009" name="J. Biol. Chem.">
        <title>OB fold-containing protein 1 (OBFC1), a human homolog of yeast Stn1, associates with TPP1 and is implicated in telomere length regulation.</title>
        <authorList>
            <person name="Wan M."/>
            <person name="Qin J."/>
            <person name="Songyang Z."/>
            <person name="Liu D."/>
        </authorList>
    </citation>
    <scope>FUNCTION</scope>
    <scope>SUBCELLULAR LOCATION</scope>
    <scope>DNA-BINDING</scope>
    <scope>INTERACTION WITH ACD</scope>
</reference>
<reference key="7">
    <citation type="journal article" date="2012" name="Cell Rep.">
        <title>Human CST has independent functions during telomere duplex replication and C-strand fill-in.</title>
        <authorList>
            <person name="Wang F."/>
            <person name="Stewart J.A."/>
            <person name="Kasbek C."/>
            <person name="Zhao Y."/>
            <person name="Wright W.E."/>
            <person name="Price C.M."/>
        </authorList>
    </citation>
    <scope>FUNCTION</scope>
</reference>
<reference key="8">
    <citation type="journal article" date="2012" name="Cell Res.">
        <title>Human Stn1 protects telomere integrity by promoting efficient lagging-strand synthesis at telomeres and mediating C-strand fill-in.</title>
        <authorList>
            <person name="Huang C."/>
            <person name="Dai X."/>
            <person name="Chai W."/>
        </authorList>
    </citation>
    <scope>FUNCTION</scope>
</reference>
<reference key="9">
    <citation type="journal article" date="2012" name="EMBO J.">
        <title>Human CST promotes telomere duplex replication and general replication restart after fork stalling.</title>
        <authorList>
            <person name="Stewart J.A."/>
            <person name="Wang F."/>
            <person name="Chaiken M.F."/>
            <person name="Kasbek C."/>
            <person name="Chastain P.D. II"/>
            <person name="Wright W.E."/>
            <person name="Price C.M."/>
        </authorList>
    </citation>
    <scope>FUNCTION</scope>
    <scope>FUNCTION OF THE CST COMPLEX</scope>
</reference>
<reference key="10">
    <citation type="journal article" date="2012" name="Nature">
        <title>The human CST complex is a terminator of telomerase activity.</title>
        <authorList>
            <person name="Chen L.Y."/>
            <person name="Redon S."/>
            <person name="Lingner J."/>
        </authorList>
    </citation>
    <scope>FUNCTION OF THE CST COMPLEX</scope>
    <scope>INTERACTION WITH CTC1; ACD AND POT1</scope>
    <scope>SUBCELLULAR LOCATION</scope>
</reference>
<reference key="11">
    <citation type="journal article" date="2013" name="Nucleus">
        <title>CST for the grand finale of telomere replication.</title>
        <authorList>
            <person name="Chen L.Y."/>
            <person name="Lingner J."/>
        </authorList>
    </citation>
    <scope>INTERACTION WITH CTC1</scope>
    <scope>FUNCTION</scope>
</reference>
<reference key="12">
    <citation type="journal article" date="2014" name="Cell Cycle">
        <title>Human CST abundance determines recovery from diverse forms of DNA damage and replication stress.</title>
        <authorList>
            <person name="Wang F."/>
            <person name="Stewart J."/>
            <person name="Price C.M."/>
        </authorList>
    </citation>
    <scope>FUNCTION OF THE CST COMPLEX</scope>
</reference>
<reference key="13">
    <citation type="journal article" date="2015" name="Mol. Cancer Res.">
        <title>DNA-directed polymerase subunits play a vital role in human telomeric overhang processing.</title>
        <authorList>
            <person name="Diotti R."/>
            <person name="Kalan S."/>
            <person name="Matveyenko A."/>
            <person name="Loayza D."/>
        </authorList>
    </citation>
    <scope>INTERACTION WITH POLA1; ACD AND POT1</scope>
</reference>
<reference key="14">
    <citation type="journal article" date="2016" name="J. Exp. Med.">
        <title>Mutations in STN1 cause Coats plus syndrome and are associated with genomic and telomere defects.</title>
        <authorList>
            <person name="Simon A.J."/>
            <person name="Lev A."/>
            <person name="Zhang Y."/>
            <person name="Weiss B."/>
            <person name="Rylova A."/>
            <person name="Eyal E."/>
            <person name="Kol N."/>
            <person name="Barel O."/>
            <person name="Cesarkas K."/>
            <person name="Soudack M."/>
            <person name="Greenberg-Kushnir N."/>
            <person name="Rhodes M."/>
            <person name="Wiest D.L."/>
            <person name="Schiby G."/>
            <person name="Barshack I."/>
            <person name="Katz S."/>
            <person name="Pras E."/>
            <person name="Poran H."/>
            <person name="Reznik-Wolf H."/>
            <person name="Ribakovsky E."/>
            <person name="Simon C."/>
            <person name="Hazou W."/>
            <person name="Sidi Y."/>
            <person name="Lahad A."/>
            <person name="Katzir H."/>
            <person name="Sagie S."/>
            <person name="Aqeilan H.A."/>
            <person name="Glousker G."/>
            <person name="Amariglio N."/>
            <person name="Tzfati Y."/>
            <person name="Selig S."/>
            <person name="Rechavi G."/>
            <person name="Somech R."/>
        </authorList>
    </citation>
    <scope>INVOLVEMENT IN CRMCC2</scope>
    <scope>VARIANTS CRMCC2 THR-135 AND TYR-157</scope>
</reference>
<reference key="15">
    <citation type="journal article" date="2013" name="PLoS ONE">
        <title>Structure of the human telomeric Stn1-Ten1 capping complex.</title>
        <authorList>
            <person name="Bryan C."/>
            <person name="Rice C."/>
            <person name="Harkisheimer M."/>
            <person name="Schultz D.C."/>
            <person name="Skordalakes E."/>
        </authorList>
    </citation>
    <scope>X-RAY CRYSTALLOGRAPHY (2.05 ANGSTROMS) OF 19-184 IN COMPLEX WITH TEN1</scope>
    <scope>X-RAY CRYSTALLOGRAPHY (1.6 ANGSTROMS) OF 191-368</scope>
    <scope>DNA-BINDING</scope>
    <scope>WHTH REGIONS</scope>
    <scope>MUTAGENESIS OF ASP-78; ILE-164 AND MET-167</scope>
</reference>
<organism>
    <name type="scientific">Homo sapiens</name>
    <name type="common">Human</name>
    <dbReference type="NCBI Taxonomy" id="9606"/>
    <lineage>
        <taxon>Eukaryota</taxon>
        <taxon>Metazoa</taxon>
        <taxon>Chordata</taxon>
        <taxon>Craniata</taxon>
        <taxon>Vertebrata</taxon>
        <taxon>Euteleostomi</taxon>
        <taxon>Mammalia</taxon>
        <taxon>Eutheria</taxon>
        <taxon>Euarchontoglires</taxon>
        <taxon>Primates</taxon>
        <taxon>Haplorrhini</taxon>
        <taxon>Catarrhini</taxon>
        <taxon>Hominidae</taxon>
        <taxon>Homo</taxon>
    </lineage>
</organism>
<sequence length="368" mass="42119">MQPGSSRCEEETPSLLWGLDPVFLAFAKLYIRDILDMKESRQVPGVFLYNGHPIKQVDVLGTVIGVRERDAFYSYGVDDSTGVINCICWKKLNTESVSAAPSAARELSLTSQLKKLQETIEQKTKIEIGDTIRVRGSIRTYREEREIHATTYYKVDDPVWNIQIARMLELPTIYRKVYDQPFHSSALEKEEALSNPGALDLPSLTSLLSEKAKEFLMENRVQSFYQQELEMVESLLSLANQPVIHSASSDQVNFKKDTTSKAIHSIFKNAIQLLQEKGLVFQKDDGFDNLYYVTREDKDLHRKIHRIIQQDCQKPNHMEKGCHFLHILACARLSIRPGLSEAVLQQVLELLEDQSDIVSTMEHYYTAF</sequence>
<gene>
    <name evidence="16" type="primary">STN1</name>
    <name type="synonym">OBFC1</name>
</gene>
<keyword id="KW-0002">3D-structure</keyword>
<keyword id="KW-0158">Chromosome</keyword>
<keyword id="KW-0225">Disease variant</keyword>
<keyword id="KW-0238">DNA-binding</keyword>
<keyword id="KW-0539">Nucleus</keyword>
<keyword id="KW-1267">Proteomics identification</keyword>
<keyword id="KW-1185">Reference proteome</keyword>
<keyword id="KW-0779">Telomere</keyword>
<proteinExistence type="evidence at protein level"/>
<evidence type="ECO:0000269" key="1">
    <source>
    </source>
</evidence>
<evidence type="ECO:0000269" key="2">
    <source>
    </source>
</evidence>
<evidence type="ECO:0000269" key="3">
    <source>
    </source>
</evidence>
<evidence type="ECO:0000269" key="4">
    <source>
    </source>
</evidence>
<evidence type="ECO:0000269" key="5">
    <source>
    </source>
</evidence>
<evidence type="ECO:0000269" key="6">
    <source>
    </source>
</evidence>
<evidence type="ECO:0000269" key="7">
    <source>
    </source>
</evidence>
<evidence type="ECO:0000269" key="8">
    <source>
    </source>
</evidence>
<evidence type="ECO:0000269" key="9">
    <source>
    </source>
</evidence>
<evidence type="ECO:0000269" key="10">
    <source>
    </source>
</evidence>
<evidence type="ECO:0000269" key="11">
    <source>
    </source>
</evidence>
<evidence type="ECO:0000269" key="12">
    <source>
    </source>
</evidence>
<evidence type="ECO:0000269" key="13">
    <source>
    </source>
</evidence>
<evidence type="ECO:0000305" key="14"/>
<evidence type="ECO:0000305" key="15">
    <source>
    </source>
</evidence>
<evidence type="ECO:0000312" key="16">
    <source>
        <dbReference type="HGNC" id="HGNC:26200"/>
    </source>
</evidence>
<evidence type="ECO:0007829" key="17">
    <source>
        <dbReference type="PDB" id="4JOI"/>
    </source>
</evidence>
<evidence type="ECO:0007829" key="18">
    <source>
        <dbReference type="PDB" id="4JQF"/>
    </source>
</evidence>
<evidence type="ECO:0007829" key="19">
    <source>
        <dbReference type="PDB" id="6W6W"/>
    </source>
</evidence>
<evidence type="ECO:0007829" key="20">
    <source>
        <dbReference type="PDB" id="8D0B"/>
    </source>
</evidence>
<name>STN1_HUMAN</name>
<protein>
    <recommendedName>
        <fullName>CST complex subunit STN1</fullName>
    </recommendedName>
    <alternativeName>
        <fullName>Oligonucleotide/oligosaccharide-binding fold-containing protein 1</fullName>
    </alternativeName>
    <alternativeName>
        <fullName>Suppressor of cdc thirteen homolog</fullName>
    </alternativeName>
</protein>
<dbReference type="EMBL" id="AK026212">
    <property type="protein sequence ID" value="BAB15396.1"/>
    <property type="molecule type" value="mRNA"/>
</dbReference>
<dbReference type="EMBL" id="AL133355">
    <property type="status" value="NOT_ANNOTATED_CDS"/>
    <property type="molecule type" value="Genomic_DNA"/>
</dbReference>
<dbReference type="EMBL" id="CH471066">
    <property type="protein sequence ID" value="EAW49619.1"/>
    <property type="molecule type" value="Genomic_DNA"/>
</dbReference>
<dbReference type="EMBL" id="CH471066">
    <property type="protein sequence ID" value="EAW49620.1"/>
    <property type="molecule type" value="Genomic_DNA"/>
</dbReference>
<dbReference type="EMBL" id="BC017400">
    <property type="protein sequence ID" value="AAH17400.1"/>
    <property type="molecule type" value="mRNA"/>
</dbReference>
<dbReference type="CCDS" id="CCDS7552.1"/>
<dbReference type="RefSeq" id="NP_079204.2">
    <property type="nucleotide sequence ID" value="NM_024928.5"/>
</dbReference>
<dbReference type="RefSeq" id="XP_006718039.1">
    <property type="nucleotide sequence ID" value="XM_006717976.3"/>
</dbReference>
<dbReference type="RefSeq" id="XP_016872158.1">
    <property type="nucleotide sequence ID" value="XM_017016669.1"/>
</dbReference>
<dbReference type="RefSeq" id="XP_016872159.1">
    <property type="nucleotide sequence ID" value="XM_017016670.1"/>
</dbReference>
<dbReference type="PDB" id="4JOI">
    <property type="method" value="X-ray"/>
    <property type="resolution" value="2.05 A"/>
    <property type="chains" value="A/B=19-184"/>
</dbReference>
<dbReference type="PDB" id="4JQF">
    <property type="method" value="X-ray"/>
    <property type="resolution" value="1.60 A"/>
    <property type="chains" value="A=191-368"/>
</dbReference>
<dbReference type="PDB" id="6W6W">
    <property type="method" value="EM"/>
    <property type="resolution" value="3.00 A"/>
    <property type="chains" value="C=2-368"/>
</dbReference>
<dbReference type="PDB" id="7U5C">
    <property type="method" value="EM"/>
    <property type="resolution" value="4.60 A"/>
    <property type="chains" value="F=1-368"/>
</dbReference>
<dbReference type="PDB" id="8D0B">
    <property type="method" value="EM"/>
    <property type="resolution" value="3.43 A"/>
    <property type="chains" value="B=7-368"/>
</dbReference>
<dbReference type="PDB" id="8D0K">
    <property type="method" value="EM"/>
    <property type="resolution" value="4.27 A"/>
    <property type="chains" value="B=2-368"/>
</dbReference>
<dbReference type="PDB" id="8SOJ">
    <property type="method" value="EM"/>
    <property type="resolution" value="3.80 A"/>
    <property type="chains" value="B=1-368"/>
</dbReference>
<dbReference type="PDB" id="8SOK">
    <property type="method" value="EM"/>
    <property type="resolution" value="4.10 A"/>
    <property type="chains" value="B=1-368"/>
</dbReference>
<dbReference type="PDBsum" id="4JOI"/>
<dbReference type="PDBsum" id="4JQF"/>
<dbReference type="PDBsum" id="6W6W"/>
<dbReference type="PDBsum" id="7U5C"/>
<dbReference type="PDBsum" id="8D0B"/>
<dbReference type="PDBsum" id="8D0K"/>
<dbReference type="PDBsum" id="8SOJ"/>
<dbReference type="PDBsum" id="8SOK"/>
<dbReference type="EMDB" id="EMD-21567"/>
<dbReference type="EMDB" id="EMD-26346"/>
<dbReference type="EMDB" id="EMD-26347"/>
<dbReference type="EMDB" id="EMD-27104"/>
<dbReference type="EMDB" id="EMD-27107"/>
<dbReference type="EMDB" id="EMD-40659"/>
<dbReference type="EMDB" id="EMD-40660"/>
<dbReference type="SMR" id="Q9H668"/>
<dbReference type="BioGRID" id="123054">
    <property type="interactions" value="100"/>
</dbReference>
<dbReference type="ComplexPortal" id="CPX-2129">
    <property type="entry name" value="CST complex"/>
</dbReference>
<dbReference type="CORUM" id="Q9H668"/>
<dbReference type="DIP" id="DIP-59914N"/>
<dbReference type="FunCoup" id="Q9H668">
    <property type="interactions" value="947"/>
</dbReference>
<dbReference type="IntAct" id="Q9H668">
    <property type="interactions" value="82"/>
</dbReference>
<dbReference type="MINT" id="Q9H668"/>
<dbReference type="STRING" id="9606.ENSP00000224950"/>
<dbReference type="iPTMnet" id="Q9H668"/>
<dbReference type="PhosphoSitePlus" id="Q9H668"/>
<dbReference type="BioMuta" id="STN1"/>
<dbReference type="DMDM" id="62900737"/>
<dbReference type="jPOST" id="Q9H668"/>
<dbReference type="MassIVE" id="Q9H668"/>
<dbReference type="PaxDb" id="9606-ENSP00000224950"/>
<dbReference type="PeptideAtlas" id="Q9H668"/>
<dbReference type="ProteomicsDB" id="80961"/>
<dbReference type="Pumba" id="Q9H668"/>
<dbReference type="Antibodypedia" id="31566">
    <property type="antibodies" value="187 antibodies from 22 providers"/>
</dbReference>
<dbReference type="DNASU" id="79991"/>
<dbReference type="Ensembl" id="ENST00000224950.8">
    <property type="protein sequence ID" value="ENSP00000224950.3"/>
    <property type="gene ID" value="ENSG00000107960.12"/>
</dbReference>
<dbReference type="Ensembl" id="ENST00000369764.2">
    <property type="protein sequence ID" value="ENSP00000358779.1"/>
    <property type="gene ID" value="ENSG00000107960.12"/>
</dbReference>
<dbReference type="Ensembl" id="ENST00000698241.1">
    <property type="protein sequence ID" value="ENSP00000513621.1"/>
    <property type="gene ID" value="ENSG00000107960.12"/>
</dbReference>
<dbReference type="Ensembl" id="ENST00000698242.1">
    <property type="protein sequence ID" value="ENSP00000513622.1"/>
    <property type="gene ID" value="ENSG00000107960.12"/>
</dbReference>
<dbReference type="Ensembl" id="ENST00000698243.1">
    <property type="protein sequence ID" value="ENSP00000513623.1"/>
    <property type="gene ID" value="ENSG00000107960.12"/>
</dbReference>
<dbReference type="Ensembl" id="ENST00000698297.1">
    <property type="protein sequence ID" value="ENSP00000513657.1"/>
    <property type="gene ID" value="ENSG00000107960.12"/>
</dbReference>
<dbReference type="Ensembl" id="ENST00000698298.1">
    <property type="protein sequence ID" value="ENSP00000513658.1"/>
    <property type="gene ID" value="ENSG00000107960.12"/>
</dbReference>
<dbReference type="Ensembl" id="ENST00000698304.1">
    <property type="protein sequence ID" value="ENSP00000513664.1"/>
    <property type="gene ID" value="ENSG00000107960.12"/>
</dbReference>
<dbReference type="GeneID" id="79991"/>
<dbReference type="KEGG" id="hsa:79991"/>
<dbReference type="MANE-Select" id="ENST00000224950.8">
    <property type="protein sequence ID" value="ENSP00000224950.3"/>
    <property type="RefSeq nucleotide sequence ID" value="NM_024928.5"/>
    <property type="RefSeq protein sequence ID" value="NP_079204.2"/>
</dbReference>
<dbReference type="UCSC" id="uc001kxl.4">
    <property type="organism name" value="human"/>
</dbReference>
<dbReference type="AGR" id="HGNC:26200"/>
<dbReference type="CTD" id="79991"/>
<dbReference type="DisGeNET" id="79991"/>
<dbReference type="GeneCards" id="STN1"/>
<dbReference type="GeneReviews" id="STN1"/>
<dbReference type="HGNC" id="HGNC:26200">
    <property type="gene designation" value="STN1"/>
</dbReference>
<dbReference type="HPA" id="ENSG00000107960">
    <property type="expression patterns" value="Low tissue specificity"/>
</dbReference>
<dbReference type="MalaCards" id="STN1"/>
<dbReference type="MIM" id="613128">
    <property type="type" value="gene"/>
</dbReference>
<dbReference type="MIM" id="617341">
    <property type="type" value="phenotype"/>
</dbReference>
<dbReference type="neXtProt" id="NX_Q9H668"/>
<dbReference type="OpenTargets" id="ENSG00000107960"/>
<dbReference type="Orphanet" id="313838">
    <property type="disease" value="Coats plus syndrome"/>
</dbReference>
<dbReference type="Orphanet" id="2032">
    <property type="disease" value="Idiopathic pulmonary fibrosis"/>
</dbReference>
<dbReference type="PharmGKB" id="PA134987118"/>
<dbReference type="VEuPathDB" id="HostDB:ENSG00000107960"/>
<dbReference type="eggNOG" id="KOG3108">
    <property type="taxonomic scope" value="Eukaryota"/>
</dbReference>
<dbReference type="GeneTree" id="ENSGT00390000000909"/>
<dbReference type="HOGENOM" id="CLU_063889_0_0_1"/>
<dbReference type="InParanoid" id="Q9H668"/>
<dbReference type="OMA" id="LCWKDEK"/>
<dbReference type="OrthoDB" id="77828at2759"/>
<dbReference type="PAN-GO" id="Q9H668">
    <property type="GO annotations" value="2 GO annotations based on evolutionary models"/>
</dbReference>
<dbReference type="PhylomeDB" id="Q9H668"/>
<dbReference type="TreeFam" id="TF328623"/>
<dbReference type="PathwayCommons" id="Q9H668"/>
<dbReference type="Reactome" id="R-HSA-174411">
    <property type="pathway name" value="Polymerase switching on the C-strand of the telomere"/>
</dbReference>
<dbReference type="Reactome" id="R-HSA-174430">
    <property type="pathway name" value="Telomere C-strand synthesis initiation"/>
</dbReference>
<dbReference type="SignaLink" id="Q9H668"/>
<dbReference type="BioGRID-ORCS" id="79991">
    <property type="hits" value="326 hits in 1156 CRISPR screens"/>
</dbReference>
<dbReference type="ChiTaRS" id="STN1">
    <property type="organism name" value="human"/>
</dbReference>
<dbReference type="EvolutionaryTrace" id="Q9H668"/>
<dbReference type="GenomeRNAi" id="79991"/>
<dbReference type="Pharos" id="Q9H668">
    <property type="development level" value="Tbio"/>
</dbReference>
<dbReference type="PRO" id="PR:Q9H668"/>
<dbReference type="Proteomes" id="UP000005640">
    <property type="component" value="Chromosome 10"/>
</dbReference>
<dbReference type="RNAct" id="Q9H668">
    <property type="molecule type" value="protein"/>
</dbReference>
<dbReference type="Bgee" id="ENSG00000107960">
    <property type="expression patterns" value="Expressed in lower esophagus mucosa and 203 other cell types or tissues"/>
</dbReference>
<dbReference type="GO" id="GO:0000781">
    <property type="term" value="C:chromosome, telomeric region"/>
    <property type="evidence" value="ECO:0000314"/>
    <property type="project" value="UniProtKB"/>
</dbReference>
<dbReference type="GO" id="GO:1990879">
    <property type="term" value="C:CST complex"/>
    <property type="evidence" value="ECO:0000314"/>
    <property type="project" value="BHF-UCL"/>
</dbReference>
<dbReference type="GO" id="GO:0001650">
    <property type="term" value="C:fibrillar center"/>
    <property type="evidence" value="ECO:0000314"/>
    <property type="project" value="HPA"/>
</dbReference>
<dbReference type="GO" id="GO:0045111">
    <property type="term" value="C:intermediate filament cytoskeleton"/>
    <property type="evidence" value="ECO:0000314"/>
    <property type="project" value="HPA"/>
</dbReference>
<dbReference type="GO" id="GO:0043231">
    <property type="term" value="C:intracellular membrane-bounded organelle"/>
    <property type="evidence" value="ECO:0000314"/>
    <property type="project" value="HPA"/>
</dbReference>
<dbReference type="GO" id="GO:0005654">
    <property type="term" value="C:nucleoplasm"/>
    <property type="evidence" value="ECO:0000314"/>
    <property type="project" value="HPA"/>
</dbReference>
<dbReference type="GO" id="GO:0005634">
    <property type="term" value="C:nucleus"/>
    <property type="evidence" value="ECO:0000314"/>
    <property type="project" value="UniProtKB"/>
</dbReference>
<dbReference type="GO" id="GO:0003697">
    <property type="term" value="F:single-stranded DNA binding"/>
    <property type="evidence" value="ECO:0000250"/>
    <property type="project" value="UniProtKB"/>
</dbReference>
<dbReference type="GO" id="GO:0043047">
    <property type="term" value="F:single-stranded telomeric DNA binding"/>
    <property type="evidence" value="ECO:0000314"/>
    <property type="project" value="UniProtKB"/>
</dbReference>
<dbReference type="GO" id="GO:0042162">
    <property type="term" value="F:telomeric DNA binding"/>
    <property type="evidence" value="ECO:0000314"/>
    <property type="project" value="BHF-UCL"/>
</dbReference>
<dbReference type="GO" id="GO:0032211">
    <property type="term" value="P:negative regulation of telomere maintenance via telomerase"/>
    <property type="evidence" value="ECO:0000314"/>
    <property type="project" value="BHF-UCL"/>
</dbReference>
<dbReference type="GO" id="GO:0045740">
    <property type="term" value="P:positive regulation of DNA replication"/>
    <property type="evidence" value="ECO:0000250"/>
    <property type="project" value="UniProtKB"/>
</dbReference>
<dbReference type="GO" id="GO:0016233">
    <property type="term" value="P:telomere capping"/>
    <property type="evidence" value="ECO:0000304"/>
    <property type="project" value="BHF-UCL"/>
</dbReference>
<dbReference type="GO" id="GO:0000723">
    <property type="term" value="P:telomere maintenance"/>
    <property type="evidence" value="ECO:0000315"/>
    <property type="project" value="UniProtKB"/>
</dbReference>
<dbReference type="GO" id="GO:0010833">
    <property type="term" value="P:telomere maintenance via telomere lengthening"/>
    <property type="evidence" value="ECO:0000315"/>
    <property type="project" value="UniProtKB"/>
</dbReference>
<dbReference type="CDD" id="cd04483">
    <property type="entry name" value="hOBFC1_like"/>
    <property type="match status" value="1"/>
</dbReference>
<dbReference type="FunFam" id="1.10.10.10:FF:000275">
    <property type="entry name" value="CST complex subunit STN1"/>
    <property type="match status" value="1"/>
</dbReference>
<dbReference type="FunFam" id="1.10.10.980:FF:000001">
    <property type="entry name" value="CST complex subunit STN1"/>
    <property type="match status" value="1"/>
</dbReference>
<dbReference type="FunFam" id="2.40.50.140:FF:000181">
    <property type="entry name" value="CST complex subunit STN1"/>
    <property type="match status" value="1"/>
</dbReference>
<dbReference type="Gene3D" id="1.10.10.980">
    <property type="entry name" value="CST, Suppressor of Cdc13 homolog, complex subunit STN1, N-terminal domain"/>
    <property type="match status" value="1"/>
</dbReference>
<dbReference type="Gene3D" id="2.40.50.140">
    <property type="entry name" value="Nucleic acid-binding proteins"/>
    <property type="match status" value="1"/>
</dbReference>
<dbReference type="Gene3D" id="1.10.10.10">
    <property type="entry name" value="Winged helix-like DNA-binding domain superfamily/Winged helix DNA-binding domain"/>
    <property type="match status" value="1"/>
</dbReference>
<dbReference type="InterPro" id="IPR015253">
    <property type="entry name" value="CST_STN1_C"/>
</dbReference>
<dbReference type="InterPro" id="IPR042082">
    <property type="entry name" value="CST_Stn1_wHTH1_sf"/>
</dbReference>
<dbReference type="InterPro" id="IPR012340">
    <property type="entry name" value="NA-bd_OB-fold"/>
</dbReference>
<dbReference type="InterPro" id="IPR004365">
    <property type="entry name" value="NA-bd_OB_tRNA"/>
</dbReference>
<dbReference type="InterPro" id="IPR040260">
    <property type="entry name" value="RFA2-like"/>
</dbReference>
<dbReference type="InterPro" id="IPR014647">
    <property type="entry name" value="Stn1"/>
</dbReference>
<dbReference type="InterPro" id="IPR036388">
    <property type="entry name" value="WH-like_DNA-bd_sf"/>
</dbReference>
<dbReference type="InterPro" id="IPR036390">
    <property type="entry name" value="WH_DNA-bd_sf"/>
</dbReference>
<dbReference type="PANTHER" id="PTHR13989:SF33">
    <property type="entry name" value="CST COMPLEX SUBUNIT STN1"/>
    <property type="match status" value="1"/>
</dbReference>
<dbReference type="PANTHER" id="PTHR13989">
    <property type="entry name" value="REPLICATION PROTEIN A-RELATED"/>
    <property type="match status" value="1"/>
</dbReference>
<dbReference type="Pfam" id="PF09170">
    <property type="entry name" value="STN1_2"/>
    <property type="match status" value="1"/>
</dbReference>
<dbReference type="Pfam" id="PF01336">
    <property type="entry name" value="tRNA_anti-codon"/>
    <property type="match status" value="1"/>
</dbReference>
<dbReference type="PIRSF" id="PIRSF036950">
    <property type="entry name" value="UCP036950"/>
    <property type="match status" value="1"/>
</dbReference>
<dbReference type="SUPFAM" id="SSF50249">
    <property type="entry name" value="Nucleic acid-binding proteins"/>
    <property type="match status" value="1"/>
</dbReference>
<dbReference type="SUPFAM" id="SSF46785">
    <property type="entry name" value="Winged helix' DNA-binding domain"/>
    <property type="match status" value="1"/>
</dbReference>
<accession>Q9H668</accession>
<accession>D3DR99</accession>
<accession>Q5TCZ0</accession>
<feature type="chain" id="PRO_0000058020" description="CST complex subunit STN1">
    <location>
        <begin position="1"/>
        <end position="368"/>
    </location>
</feature>
<feature type="DNA-binding region" description="OB">
    <location>
        <begin position="57"/>
        <end position="155"/>
    </location>
</feature>
<feature type="region of interest" description="Interaction with CTC1" evidence="10">
    <location>
        <begin position="1"/>
        <end position="185"/>
    </location>
</feature>
<feature type="region of interest" description="Winged helix-turn-helix (wHTH) 1">
    <location>
        <begin position="191"/>
        <end position="295"/>
    </location>
</feature>
<feature type="region of interest" description="Winged helix-turn-helix (wHTH) 2">
    <location>
        <begin position="296"/>
        <end position="368"/>
    </location>
</feature>
<feature type="sequence variant" id="VAR_078499" description="In CRMCC2; dbSNP:rs1057519583." evidence="13">
    <original>R</original>
    <variation>T</variation>
    <location>
        <position position="135"/>
    </location>
</feature>
<feature type="sequence variant" id="VAR_022364" description="In dbSNP:rs2487999." evidence="1 2">
    <original>T</original>
    <variation>A</variation>
    <location>
        <position position="151"/>
    </location>
</feature>
<feature type="sequence variant" id="VAR_078500" description="In CRMCC2; dbSNP:rs765462548." evidence="13">
    <original>D</original>
    <variation>Y</variation>
    <location>
        <position position="157"/>
    </location>
</feature>
<feature type="sequence variant" id="VAR_022365" description="In dbSNP:rs10786775." evidence="1 2">
    <original>S</original>
    <variation>C</variation>
    <location>
        <position position="248"/>
    </location>
</feature>
<feature type="mutagenesis site" description="Defective of TEN1 binding; when associated with Ala-164 or Ala-167." evidence="9">
    <original>D</original>
    <variation>A</variation>
    <location>
        <position position="78"/>
    </location>
</feature>
<feature type="mutagenesis site" description="Defective of TEN1 binding; when associated with Ala-78." evidence="9">
    <original>I</original>
    <variation>A</variation>
    <location>
        <position position="164"/>
    </location>
</feature>
<feature type="mutagenesis site" description="Defective of TEN1 binding; when associated with Ala-78." evidence="9">
    <original>M</original>
    <variation>A</variation>
    <location>
        <position position="167"/>
    </location>
</feature>
<feature type="helix" evidence="19">
    <location>
        <begin position="14"/>
        <end position="16"/>
    </location>
</feature>
<feature type="helix" evidence="20">
    <location>
        <begin position="17"/>
        <end position="19"/>
    </location>
</feature>
<feature type="helix" evidence="19">
    <location>
        <begin position="21"/>
        <end position="24"/>
    </location>
</feature>
<feature type="helix" evidence="17">
    <location>
        <begin position="31"/>
        <end position="36"/>
    </location>
</feature>
<feature type="strand" evidence="17">
    <location>
        <begin position="41"/>
        <end position="43"/>
    </location>
</feature>
<feature type="strand" evidence="17">
    <location>
        <begin position="47"/>
        <end position="49"/>
    </location>
</feature>
<feature type="strand" evidence="17">
    <location>
        <begin position="52"/>
        <end position="54"/>
    </location>
</feature>
<feature type="strand" evidence="17">
    <location>
        <begin position="56"/>
        <end position="68"/>
    </location>
</feature>
<feature type="strand" evidence="17">
    <location>
        <begin position="70"/>
        <end position="78"/>
    </location>
</feature>
<feature type="strand" evidence="17">
    <location>
        <begin position="83"/>
        <end position="89"/>
    </location>
</feature>
<feature type="helix" evidence="17">
    <location>
        <begin position="113"/>
        <end position="117"/>
    </location>
</feature>
<feature type="helix" evidence="17">
    <location>
        <begin position="118"/>
        <end position="122"/>
    </location>
</feature>
<feature type="strand" evidence="17">
    <location>
        <begin position="131"/>
        <end position="141"/>
    </location>
</feature>
<feature type="strand" evidence="17">
    <location>
        <begin position="144"/>
        <end position="155"/>
    </location>
</feature>
<feature type="strand" evidence="19">
    <location>
        <begin position="158"/>
        <end position="160"/>
    </location>
</feature>
<feature type="helix" evidence="17">
    <location>
        <begin position="161"/>
        <end position="176"/>
    </location>
</feature>
<feature type="turn" evidence="17">
    <location>
        <begin position="177"/>
        <end position="179"/>
    </location>
</feature>
<feature type="turn" evidence="20">
    <location>
        <begin position="187"/>
        <end position="189"/>
    </location>
</feature>
<feature type="helix" evidence="18">
    <location>
        <begin position="191"/>
        <end position="194"/>
    </location>
</feature>
<feature type="helix" evidence="18">
    <location>
        <begin position="196"/>
        <end position="198"/>
    </location>
</feature>
<feature type="helix" evidence="18">
    <location>
        <begin position="201"/>
        <end position="218"/>
    </location>
</feature>
<feature type="strand" evidence="18">
    <location>
        <begin position="223"/>
        <end position="225"/>
    </location>
</feature>
<feature type="helix" evidence="18">
    <location>
        <begin position="226"/>
        <end position="230"/>
    </location>
</feature>
<feature type="helix" evidence="18">
    <location>
        <begin position="233"/>
        <end position="239"/>
    </location>
</feature>
<feature type="helix" evidence="18">
    <location>
        <begin position="242"/>
        <end position="245"/>
    </location>
</feature>
<feature type="helix" evidence="18">
    <location>
        <begin position="259"/>
        <end position="276"/>
    </location>
</feature>
<feature type="strand" evidence="18">
    <location>
        <begin position="279"/>
        <end position="281"/>
    </location>
</feature>
<feature type="strand" evidence="18">
    <location>
        <begin position="284"/>
        <end position="286"/>
    </location>
</feature>
<feature type="strand" evidence="18">
    <location>
        <begin position="290"/>
        <end position="293"/>
    </location>
</feature>
<feature type="helix" evidence="18">
    <location>
        <begin position="294"/>
        <end position="296"/>
    </location>
</feature>
<feature type="helix" evidence="18">
    <location>
        <begin position="298"/>
        <end position="309"/>
    </location>
</feature>
<feature type="helix" evidence="18">
    <location>
        <begin position="311"/>
        <end position="313"/>
    </location>
</feature>
<feature type="strand" evidence="20">
    <location>
        <begin position="316"/>
        <end position="318"/>
    </location>
</feature>
<feature type="strand" evidence="18">
    <location>
        <begin position="320"/>
        <end position="323"/>
    </location>
</feature>
<feature type="helix" evidence="18">
    <location>
        <begin position="324"/>
        <end position="334"/>
    </location>
</feature>
<feature type="helix" evidence="18">
    <location>
        <begin position="341"/>
        <end position="353"/>
    </location>
</feature>
<feature type="strand" evidence="18">
    <location>
        <begin position="356"/>
        <end position="361"/>
    </location>
</feature>
<feature type="strand" evidence="18">
    <location>
        <begin position="364"/>
        <end position="367"/>
    </location>
</feature>